<accession>Q58228</accession>
<organism>
    <name type="scientific">Methanocaldococcus jannaschii (strain ATCC 43067 / DSM 2661 / JAL-1 / JCM 10045 / NBRC 100440)</name>
    <name type="common">Methanococcus jannaschii</name>
    <dbReference type="NCBI Taxonomy" id="243232"/>
    <lineage>
        <taxon>Archaea</taxon>
        <taxon>Methanobacteriati</taxon>
        <taxon>Methanobacteriota</taxon>
        <taxon>Methanomada group</taxon>
        <taxon>Methanococci</taxon>
        <taxon>Methanococcales</taxon>
        <taxon>Methanocaldococcaceae</taxon>
        <taxon>Methanocaldococcus</taxon>
    </lineage>
</organism>
<keyword id="KW-1185">Reference proteome</keyword>
<protein>
    <recommendedName>
        <fullName>Uncharacterized protein MJ0818</fullName>
    </recommendedName>
</protein>
<gene>
    <name type="ordered locus">MJ0818</name>
</gene>
<dbReference type="EMBL" id="L77117">
    <property type="protein sequence ID" value="AAB98819.1"/>
    <property type="molecule type" value="Genomic_DNA"/>
</dbReference>
<dbReference type="PIR" id="B64402">
    <property type="entry name" value="B64402"/>
</dbReference>
<dbReference type="RefSeq" id="WP_010870329.1">
    <property type="nucleotide sequence ID" value="NC_000909.1"/>
</dbReference>
<dbReference type="SMR" id="Q58228"/>
<dbReference type="FunCoup" id="Q58228">
    <property type="interactions" value="2"/>
</dbReference>
<dbReference type="STRING" id="243232.MJ_0818"/>
<dbReference type="PaxDb" id="243232-MJ_0818"/>
<dbReference type="EnsemblBacteria" id="AAB98819">
    <property type="protein sequence ID" value="AAB98819"/>
    <property type="gene ID" value="MJ_0818"/>
</dbReference>
<dbReference type="GeneID" id="1451701"/>
<dbReference type="KEGG" id="mja:MJ_0818"/>
<dbReference type="eggNOG" id="arCOG05052">
    <property type="taxonomic scope" value="Archaea"/>
</dbReference>
<dbReference type="HOGENOM" id="CLU_116581_0_0_2"/>
<dbReference type="InParanoid" id="Q58228"/>
<dbReference type="OrthoDB" id="65592at2157"/>
<dbReference type="Proteomes" id="UP000000805">
    <property type="component" value="Chromosome"/>
</dbReference>
<dbReference type="GO" id="GO:0003676">
    <property type="term" value="F:nucleic acid binding"/>
    <property type="evidence" value="ECO:0007669"/>
    <property type="project" value="InterPro"/>
</dbReference>
<dbReference type="CDD" id="cd03524">
    <property type="entry name" value="RPA2_OBF_family"/>
    <property type="match status" value="1"/>
</dbReference>
<dbReference type="Gene3D" id="3.40.10.10">
    <property type="entry name" value="DNA Methylphosphotriester Repair Domain"/>
    <property type="match status" value="1"/>
</dbReference>
<dbReference type="Gene3D" id="2.40.50.140">
    <property type="entry name" value="Nucleic acid-binding proteins"/>
    <property type="match status" value="1"/>
</dbReference>
<dbReference type="InterPro" id="IPR035451">
    <property type="entry name" value="Ada-like_dom_sf"/>
</dbReference>
<dbReference type="InterPro" id="IPR012340">
    <property type="entry name" value="NA-bd_OB-fold"/>
</dbReference>
<dbReference type="InterPro" id="IPR004365">
    <property type="entry name" value="NA-bd_OB_tRNA"/>
</dbReference>
<dbReference type="InterPro" id="IPR016798">
    <property type="entry name" value="UCP021980_OB-fold"/>
</dbReference>
<dbReference type="Pfam" id="PF01336">
    <property type="entry name" value="tRNA_anti-codon"/>
    <property type="match status" value="1"/>
</dbReference>
<dbReference type="PIRSF" id="PIRSF021980">
    <property type="entry name" value="UCP021980_RNA-bd"/>
    <property type="match status" value="1"/>
</dbReference>
<dbReference type="SUPFAM" id="SSF57884">
    <property type="entry name" value="Ada DNA repair protein, N-terminal domain (N-Ada 10)"/>
    <property type="match status" value="1"/>
</dbReference>
<dbReference type="SUPFAM" id="SSF50249">
    <property type="entry name" value="Nucleic acid-binding proteins"/>
    <property type="match status" value="1"/>
</dbReference>
<sequence>MKLTEKNITLFALTCFVIISTTWLFLNPIQPKEKHIAEIKEGDYVVIKGYIQEMYVKRDKYRHVINISRIVINDGTGNLDVVAFGKTREELLTYILSYNPMIKEGDYIEVKGRVTLYKGKYEIILNNIKDFKLLKKNNFERDIYLSPTPTGIYASKYGKKYHTSKNCPYGKRLKEENIIYFYSEDDAKALGYEKCKWCEEHGG</sequence>
<proteinExistence type="predicted"/>
<name>Y818_METJA</name>
<feature type="chain" id="PRO_0000107062" description="Uncharacterized protein MJ0818">
    <location>
        <begin position="1"/>
        <end position="203"/>
    </location>
</feature>
<reference key="1">
    <citation type="journal article" date="1996" name="Science">
        <title>Complete genome sequence of the methanogenic archaeon, Methanococcus jannaschii.</title>
        <authorList>
            <person name="Bult C.J."/>
            <person name="White O."/>
            <person name="Olsen G.J."/>
            <person name="Zhou L."/>
            <person name="Fleischmann R.D."/>
            <person name="Sutton G.G."/>
            <person name="Blake J.A."/>
            <person name="FitzGerald L.M."/>
            <person name="Clayton R.A."/>
            <person name="Gocayne J.D."/>
            <person name="Kerlavage A.R."/>
            <person name="Dougherty B.A."/>
            <person name="Tomb J.-F."/>
            <person name="Adams M.D."/>
            <person name="Reich C.I."/>
            <person name="Overbeek R."/>
            <person name="Kirkness E.F."/>
            <person name="Weinstock K.G."/>
            <person name="Merrick J.M."/>
            <person name="Glodek A."/>
            <person name="Scott J.L."/>
            <person name="Geoghagen N.S.M."/>
            <person name="Weidman J.F."/>
            <person name="Fuhrmann J.L."/>
            <person name="Nguyen D."/>
            <person name="Utterback T.R."/>
            <person name="Kelley J.M."/>
            <person name="Peterson J.D."/>
            <person name="Sadow P.W."/>
            <person name="Hanna M.C."/>
            <person name="Cotton M.D."/>
            <person name="Roberts K.M."/>
            <person name="Hurst M.A."/>
            <person name="Kaine B.P."/>
            <person name="Borodovsky M."/>
            <person name="Klenk H.-P."/>
            <person name="Fraser C.M."/>
            <person name="Smith H.O."/>
            <person name="Woese C.R."/>
            <person name="Venter J.C."/>
        </authorList>
    </citation>
    <scope>NUCLEOTIDE SEQUENCE [LARGE SCALE GENOMIC DNA]</scope>
    <source>
        <strain>ATCC 43067 / DSM 2661 / JAL-1 / JCM 10045 / NBRC 100440</strain>
    </source>
</reference>